<feature type="chain" id="PRO_1000140770" description="Small ribosomal subunit protein uS4">
    <location>
        <begin position="1"/>
        <end position="205"/>
    </location>
</feature>
<feature type="domain" description="S4 RNA-binding" evidence="1">
    <location>
        <begin position="94"/>
        <end position="155"/>
    </location>
</feature>
<feature type="region of interest" description="Disordered" evidence="2">
    <location>
        <begin position="18"/>
        <end position="46"/>
    </location>
</feature>
<accession>B4RHE8</accession>
<gene>
    <name evidence="1" type="primary">rpsD</name>
    <name type="ordered locus">PHZ_c0994</name>
</gene>
<organism>
    <name type="scientific">Phenylobacterium zucineum (strain HLK1)</name>
    <dbReference type="NCBI Taxonomy" id="450851"/>
    <lineage>
        <taxon>Bacteria</taxon>
        <taxon>Pseudomonadati</taxon>
        <taxon>Pseudomonadota</taxon>
        <taxon>Alphaproteobacteria</taxon>
        <taxon>Caulobacterales</taxon>
        <taxon>Caulobacteraceae</taxon>
        <taxon>Phenylobacterium</taxon>
    </lineage>
</organism>
<keyword id="KW-1185">Reference proteome</keyword>
<keyword id="KW-0687">Ribonucleoprotein</keyword>
<keyword id="KW-0689">Ribosomal protein</keyword>
<keyword id="KW-0694">RNA-binding</keyword>
<keyword id="KW-0699">rRNA-binding</keyword>
<protein>
    <recommendedName>
        <fullName evidence="1">Small ribosomal subunit protein uS4</fullName>
    </recommendedName>
    <alternativeName>
        <fullName evidence="3">30S ribosomal protein S4</fullName>
    </alternativeName>
</protein>
<reference key="1">
    <citation type="journal article" date="2008" name="BMC Genomics">
        <title>Complete genome of Phenylobacterium zucineum - a novel facultative intracellular bacterium isolated from human erythroleukemia cell line K562.</title>
        <authorList>
            <person name="Luo Y."/>
            <person name="Xu X."/>
            <person name="Ding Z."/>
            <person name="Liu Z."/>
            <person name="Zhang B."/>
            <person name="Yan Z."/>
            <person name="Sun J."/>
            <person name="Hu S."/>
            <person name="Hu X."/>
        </authorList>
    </citation>
    <scope>NUCLEOTIDE SEQUENCE [LARGE SCALE GENOMIC DNA]</scope>
    <source>
        <strain>HLK1</strain>
    </source>
</reference>
<evidence type="ECO:0000255" key="1">
    <source>
        <dbReference type="HAMAP-Rule" id="MF_01306"/>
    </source>
</evidence>
<evidence type="ECO:0000256" key="2">
    <source>
        <dbReference type="SAM" id="MobiDB-lite"/>
    </source>
</evidence>
<evidence type="ECO:0000305" key="3"/>
<sequence>MSKRHSAKYKLDRRMGENIWGRPKSPVNSRAYGPGQHGQRRKSKVSDFGLQLRAKQKLKGYYGNITEKQFVRIYTEAARRKGNTSENLIALLESRLDAVVYRAKFVPTPFAARQFVNHGHVLVNGKRVNIPSYRVKPGDVVSVRERSRNMALVLEALQSSERDTPDYITLDAKGMSATFVRAPELAEVPYPVKMEPNLVVEFYAS</sequence>
<dbReference type="EMBL" id="CP000747">
    <property type="protein sequence ID" value="ACG77408.1"/>
    <property type="molecule type" value="Genomic_DNA"/>
</dbReference>
<dbReference type="RefSeq" id="WP_012521554.1">
    <property type="nucleotide sequence ID" value="NC_011144.1"/>
</dbReference>
<dbReference type="SMR" id="B4RHE8"/>
<dbReference type="STRING" id="450851.PHZ_c0994"/>
<dbReference type="KEGG" id="pzu:PHZ_c0994"/>
<dbReference type="eggNOG" id="COG0522">
    <property type="taxonomic scope" value="Bacteria"/>
</dbReference>
<dbReference type="HOGENOM" id="CLU_092403_0_0_5"/>
<dbReference type="OrthoDB" id="9803672at2"/>
<dbReference type="Proteomes" id="UP000001868">
    <property type="component" value="Chromosome"/>
</dbReference>
<dbReference type="GO" id="GO:0015935">
    <property type="term" value="C:small ribosomal subunit"/>
    <property type="evidence" value="ECO:0007669"/>
    <property type="project" value="InterPro"/>
</dbReference>
<dbReference type="GO" id="GO:0019843">
    <property type="term" value="F:rRNA binding"/>
    <property type="evidence" value="ECO:0007669"/>
    <property type="project" value="UniProtKB-UniRule"/>
</dbReference>
<dbReference type="GO" id="GO:0003735">
    <property type="term" value="F:structural constituent of ribosome"/>
    <property type="evidence" value="ECO:0007669"/>
    <property type="project" value="InterPro"/>
</dbReference>
<dbReference type="GO" id="GO:0042274">
    <property type="term" value="P:ribosomal small subunit biogenesis"/>
    <property type="evidence" value="ECO:0007669"/>
    <property type="project" value="TreeGrafter"/>
</dbReference>
<dbReference type="GO" id="GO:0006412">
    <property type="term" value="P:translation"/>
    <property type="evidence" value="ECO:0007669"/>
    <property type="project" value="UniProtKB-UniRule"/>
</dbReference>
<dbReference type="CDD" id="cd00165">
    <property type="entry name" value="S4"/>
    <property type="match status" value="1"/>
</dbReference>
<dbReference type="FunFam" id="3.10.290.10:FF:000001">
    <property type="entry name" value="30S ribosomal protein S4"/>
    <property type="match status" value="1"/>
</dbReference>
<dbReference type="Gene3D" id="1.10.1050.10">
    <property type="entry name" value="Ribosomal Protein S4 Delta 41, Chain A, domain 1"/>
    <property type="match status" value="1"/>
</dbReference>
<dbReference type="Gene3D" id="3.10.290.10">
    <property type="entry name" value="RNA-binding S4 domain"/>
    <property type="match status" value="1"/>
</dbReference>
<dbReference type="HAMAP" id="MF_01306_B">
    <property type="entry name" value="Ribosomal_uS4_B"/>
    <property type="match status" value="1"/>
</dbReference>
<dbReference type="InterPro" id="IPR022801">
    <property type="entry name" value="Ribosomal_uS4"/>
</dbReference>
<dbReference type="InterPro" id="IPR005709">
    <property type="entry name" value="Ribosomal_uS4_bac-type"/>
</dbReference>
<dbReference type="InterPro" id="IPR018079">
    <property type="entry name" value="Ribosomal_uS4_CS"/>
</dbReference>
<dbReference type="InterPro" id="IPR001912">
    <property type="entry name" value="Ribosomal_uS4_N"/>
</dbReference>
<dbReference type="InterPro" id="IPR002942">
    <property type="entry name" value="S4_RNA-bd"/>
</dbReference>
<dbReference type="InterPro" id="IPR036986">
    <property type="entry name" value="S4_RNA-bd_sf"/>
</dbReference>
<dbReference type="NCBIfam" id="NF003717">
    <property type="entry name" value="PRK05327.1"/>
    <property type="match status" value="1"/>
</dbReference>
<dbReference type="NCBIfam" id="TIGR01017">
    <property type="entry name" value="rpsD_bact"/>
    <property type="match status" value="1"/>
</dbReference>
<dbReference type="PANTHER" id="PTHR11831">
    <property type="entry name" value="30S 40S RIBOSOMAL PROTEIN"/>
    <property type="match status" value="1"/>
</dbReference>
<dbReference type="PANTHER" id="PTHR11831:SF4">
    <property type="entry name" value="SMALL RIBOSOMAL SUBUNIT PROTEIN US4M"/>
    <property type="match status" value="1"/>
</dbReference>
<dbReference type="Pfam" id="PF00163">
    <property type="entry name" value="Ribosomal_S4"/>
    <property type="match status" value="1"/>
</dbReference>
<dbReference type="Pfam" id="PF01479">
    <property type="entry name" value="S4"/>
    <property type="match status" value="1"/>
</dbReference>
<dbReference type="SMART" id="SM01390">
    <property type="entry name" value="Ribosomal_S4"/>
    <property type="match status" value="1"/>
</dbReference>
<dbReference type="SMART" id="SM00363">
    <property type="entry name" value="S4"/>
    <property type="match status" value="1"/>
</dbReference>
<dbReference type="SUPFAM" id="SSF55174">
    <property type="entry name" value="Alpha-L RNA-binding motif"/>
    <property type="match status" value="1"/>
</dbReference>
<dbReference type="PROSITE" id="PS00632">
    <property type="entry name" value="RIBOSOMAL_S4"/>
    <property type="match status" value="1"/>
</dbReference>
<dbReference type="PROSITE" id="PS50889">
    <property type="entry name" value="S4"/>
    <property type="match status" value="1"/>
</dbReference>
<proteinExistence type="inferred from homology"/>
<comment type="function">
    <text evidence="1">One of the primary rRNA binding proteins, it binds directly to 16S rRNA where it nucleates assembly of the body of the 30S subunit.</text>
</comment>
<comment type="function">
    <text evidence="1">With S5 and S12 plays an important role in translational accuracy.</text>
</comment>
<comment type="subunit">
    <text evidence="1">Part of the 30S ribosomal subunit. Contacts protein S5. The interaction surface between S4 and S5 is involved in control of translational fidelity.</text>
</comment>
<comment type="similarity">
    <text evidence="1">Belongs to the universal ribosomal protein uS4 family.</text>
</comment>
<name>RS4_PHEZH</name>